<reference key="1">
    <citation type="journal article" date="2003" name="J. Bacteriol.">
        <title>Comparative analyses of the complete genome sequences of Pierce's disease and citrus variegated chlorosis strains of Xylella fastidiosa.</title>
        <authorList>
            <person name="Van Sluys M.A."/>
            <person name="de Oliveira M.C."/>
            <person name="Monteiro-Vitorello C.B."/>
            <person name="Miyaki C.Y."/>
            <person name="Furlan L.R."/>
            <person name="Camargo L.E.A."/>
            <person name="da Silva A.C.R."/>
            <person name="Moon D.H."/>
            <person name="Takita M.A."/>
            <person name="Lemos E.G.M."/>
            <person name="Machado M.A."/>
            <person name="Ferro M.I.T."/>
            <person name="da Silva F.R."/>
            <person name="Goldman M.H.S."/>
            <person name="Goldman G.H."/>
            <person name="Lemos M.V.F."/>
            <person name="El-Dorry H."/>
            <person name="Tsai S.M."/>
            <person name="Carrer H."/>
            <person name="Carraro D.M."/>
            <person name="de Oliveira R.C."/>
            <person name="Nunes L.R."/>
            <person name="Siqueira W.J."/>
            <person name="Coutinho L.L."/>
            <person name="Kimura E.T."/>
            <person name="Ferro E.S."/>
            <person name="Harakava R."/>
            <person name="Kuramae E.E."/>
            <person name="Marino C.L."/>
            <person name="Giglioti E."/>
            <person name="Abreu I.L."/>
            <person name="Alves L.M.C."/>
            <person name="do Amaral A.M."/>
            <person name="Baia G.S."/>
            <person name="Blanco S.R."/>
            <person name="Brito M.S."/>
            <person name="Cannavan F.S."/>
            <person name="Celestino A.V."/>
            <person name="da Cunha A.F."/>
            <person name="Fenille R.C."/>
            <person name="Ferro J.A."/>
            <person name="Formighieri E.F."/>
            <person name="Kishi L.T."/>
            <person name="Leoni S.G."/>
            <person name="Oliveira A.R."/>
            <person name="Rosa V.E. Jr."/>
            <person name="Sassaki F.T."/>
            <person name="Sena J.A.D."/>
            <person name="de Souza A.A."/>
            <person name="Truffi D."/>
            <person name="Tsukumo F."/>
            <person name="Yanai G.M."/>
            <person name="Zaros L.G."/>
            <person name="Civerolo E.L."/>
            <person name="Simpson A.J.G."/>
            <person name="Almeida N.F. Jr."/>
            <person name="Setubal J.C."/>
            <person name="Kitajima J.P."/>
        </authorList>
    </citation>
    <scope>NUCLEOTIDE SEQUENCE [LARGE SCALE GENOMIC DNA]</scope>
    <source>
        <strain>Temecula1 / ATCC 700964</strain>
    </source>
</reference>
<comment type="function">
    <text evidence="1">Cell wall formation.</text>
</comment>
<comment type="catalytic activity">
    <reaction evidence="1">
        <text>UDP-N-acetyl-alpha-D-muramate + L-alanine + ATP = UDP-N-acetyl-alpha-D-muramoyl-L-alanine + ADP + phosphate + H(+)</text>
        <dbReference type="Rhea" id="RHEA:23372"/>
        <dbReference type="ChEBI" id="CHEBI:15378"/>
        <dbReference type="ChEBI" id="CHEBI:30616"/>
        <dbReference type="ChEBI" id="CHEBI:43474"/>
        <dbReference type="ChEBI" id="CHEBI:57972"/>
        <dbReference type="ChEBI" id="CHEBI:70757"/>
        <dbReference type="ChEBI" id="CHEBI:83898"/>
        <dbReference type="ChEBI" id="CHEBI:456216"/>
        <dbReference type="EC" id="6.3.2.8"/>
    </reaction>
</comment>
<comment type="pathway">
    <text evidence="1">Cell wall biogenesis; peptidoglycan biosynthesis.</text>
</comment>
<comment type="subcellular location">
    <subcellularLocation>
        <location evidence="1">Cytoplasm</location>
    </subcellularLocation>
</comment>
<comment type="similarity">
    <text evidence="1">Belongs to the MurCDEF family.</text>
</comment>
<accession>Q87AG0</accession>
<keyword id="KW-0067">ATP-binding</keyword>
<keyword id="KW-0131">Cell cycle</keyword>
<keyword id="KW-0132">Cell division</keyword>
<keyword id="KW-0133">Cell shape</keyword>
<keyword id="KW-0961">Cell wall biogenesis/degradation</keyword>
<keyword id="KW-0963">Cytoplasm</keyword>
<keyword id="KW-0436">Ligase</keyword>
<keyword id="KW-0547">Nucleotide-binding</keyword>
<keyword id="KW-0573">Peptidoglycan synthesis</keyword>
<keyword id="KW-1185">Reference proteome</keyword>
<feature type="chain" id="PRO_0000182189" description="UDP-N-acetylmuramate--L-alanine ligase">
    <location>
        <begin position="1"/>
        <end position="477"/>
    </location>
</feature>
<feature type="binding site" evidence="1">
    <location>
        <begin position="122"/>
        <end position="128"/>
    </location>
    <ligand>
        <name>ATP</name>
        <dbReference type="ChEBI" id="CHEBI:30616"/>
    </ligand>
</feature>
<dbReference type="EC" id="6.3.2.8" evidence="1"/>
<dbReference type="EMBL" id="AE009442">
    <property type="protein sequence ID" value="AAO29697.1"/>
    <property type="molecule type" value="Genomic_DNA"/>
</dbReference>
<dbReference type="RefSeq" id="WP_004090503.1">
    <property type="nucleotide sequence ID" value="NC_004556.1"/>
</dbReference>
<dbReference type="SMR" id="Q87AG0"/>
<dbReference type="GeneID" id="93905724"/>
<dbReference type="KEGG" id="xft:PD_1865"/>
<dbReference type="HOGENOM" id="CLU_028104_2_2_6"/>
<dbReference type="UniPathway" id="UPA00219"/>
<dbReference type="Proteomes" id="UP000002516">
    <property type="component" value="Chromosome"/>
</dbReference>
<dbReference type="GO" id="GO:0005737">
    <property type="term" value="C:cytoplasm"/>
    <property type="evidence" value="ECO:0007669"/>
    <property type="project" value="UniProtKB-SubCell"/>
</dbReference>
<dbReference type="GO" id="GO:0005524">
    <property type="term" value="F:ATP binding"/>
    <property type="evidence" value="ECO:0007669"/>
    <property type="project" value="UniProtKB-UniRule"/>
</dbReference>
<dbReference type="GO" id="GO:0008763">
    <property type="term" value="F:UDP-N-acetylmuramate-L-alanine ligase activity"/>
    <property type="evidence" value="ECO:0007669"/>
    <property type="project" value="UniProtKB-UniRule"/>
</dbReference>
<dbReference type="GO" id="GO:0051301">
    <property type="term" value="P:cell division"/>
    <property type="evidence" value="ECO:0007669"/>
    <property type="project" value="UniProtKB-KW"/>
</dbReference>
<dbReference type="GO" id="GO:0071555">
    <property type="term" value="P:cell wall organization"/>
    <property type="evidence" value="ECO:0007669"/>
    <property type="project" value="UniProtKB-KW"/>
</dbReference>
<dbReference type="GO" id="GO:0009252">
    <property type="term" value="P:peptidoglycan biosynthetic process"/>
    <property type="evidence" value="ECO:0007669"/>
    <property type="project" value="UniProtKB-UniRule"/>
</dbReference>
<dbReference type="GO" id="GO:0008360">
    <property type="term" value="P:regulation of cell shape"/>
    <property type="evidence" value="ECO:0007669"/>
    <property type="project" value="UniProtKB-KW"/>
</dbReference>
<dbReference type="Gene3D" id="3.90.190.20">
    <property type="entry name" value="Mur ligase, C-terminal domain"/>
    <property type="match status" value="1"/>
</dbReference>
<dbReference type="Gene3D" id="3.40.1190.10">
    <property type="entry name" value="Mur-like, catalytic domain"/>
    <property type="match status" value="1"/>
</dbReference>
<dbReference type="Gene3D" id="3.40.50.720">
    <property type="entry name" value="NAD(P)-binding Rossmann-like Domain"/>
    <property type="match status" value="1"/>
</dbReference>
<dbReference type="HAMAP" id="MF_00046">
    <property type="entry name" value="MurC"/>
    <property type="match status" value="1"/>
</dbReference>
<dbReference type="InterPro" id="IPR036565">
    <property type="entry name" value="Mur-like_cat_sf"/>
</dbReference>
<dbReference type="InterPro" id="IPR004101">
    <property type="entry name" value="Mur_ligase_C"/>
</dbReference>
<dbReference type="InterPro" id="IPR036615">
    <property type="entry name" value="Mur_ligase_C_dom_sf"/>
</dbReference>
<dbReference type="InterPro" id="IPR013221">
    <property type="entry name" value="Mur_ligase_cen"/>
</dbReference>
<dbReference type="InterPro" id="IPR000713">
    <property type="entry name" value="Mur_ligase_N"/>
</dbReference>
<dbReference type="InterPro" id="IPR050061">
    <property type="entry name" value="MurCDEF_pg_biosynth"/>
</dbReference>
<dbReference type="InterPro" id="IPR005758">
    <property type="entry name" value="UDP-N-AcMur_Ala_ligase_MurC"/>
</dbReference>
<dbReference type="NCBIfam" id="TIGR01082">
    <property type="entry name" value="murC"/>
    <property type="match status" value="1"/>
</dbReference>
<dbReference type="PANTHER" id="PTHR43445:SF3">
    <property type="entry name" value="UDP-N-ACETYLMURAMATE--L-ALANINE LIGASE"/>
    <property type="match status" value="1"/>
</dbReference>
<dbReference type="PANTHER" id="PTHR43445">
    <property type="entry name" value="UDP-N-ACETYLMURAMATE--L-ALANINE LIGASE-RELATED"/>
    <property type="match status" value="1"/>
</dbReference>
<dbReference type="Pfam" id="PF01225">
    <property type="entry name" value="Mur_ligase"/>
    <property type="match status" value="1"/>
</dbReference>
<dbReference type="Pfam" id="PF02875">
    <property type="entry name" value="Mur_ligase_C"/>
    <property type="match status" value="1"/>
</dbReference>
<dbReference type="Pfam" id="PF08245">
    <property type="entry name" value="Mur_ligase_M"/>
    <property type="match status" value="1"/>
</dbReference>
<dbReference type="SUPFAM" id="SSF51984">
    <property type="entry name" value="MurCD N-terminal domain"/>
    <property type="match status" value="1"/>
</dbReference>
<dbReference type="SUPFAM" id="SSF53623">
    <property type="entry name" value="MurD-like peptide ligases, catalytic domain"/>
    <property type="match status" value="1"/>
</dbReference>
<dbReference type="SUPFAM" id="SSF53244">
    <property type="entry name" value="MurD-like peptide ligases, peptide-binding domain"/>
    <property type="match status" value="1"/>
</dbReference>
<gene>
    <name evidence="1" type="primary">murC</name>
    <name type="ordered locus">PD_1865</name>
</gene>
<organism>
    <name type="scientific">Xylella fastidiosa (strain Temecula1 / ATCC 700964)</name>
    <dbReference type="NCBI Taxonomy" id="183190"/>
    <lineage>
        <taxon>Bacteria</taxon>
        <taxon>Pseudomonadati</taxon>
        <taxon>Pseudomonadota</taxon>
        <taxon>Gammaproteobacteria</taxon>
        <taxon>Lysobacterales</taxon>
        <taxon>Lysobacteraceae</taxon>
        <taxon>Xylella</taxon>
    </lineage>
</organism>
<evidence type="ECO:0000255" key="1">
    <source>
        <dbReference type="HAMAP-Rule" id="MF_00046"/>
    </source>
</evidence>
<proteinExistence type="inferred from homology"/>
<name>MURC_XYLFT</name>
<sequence>MIRRLQDNGDLIRAFPRVHFVGIGGAGMTGIAEVMLTLGYEVSGSDNADNAATRRLATLGARVMRGHSAANVLGTDCVVVSSAIREDNPELMEARSQRIPIMPRAAMLAELMRFRHGIAVAGTHGKTTTTSLIAAVLSEGGLDPTFVIGGQLLAAGANAKLGAGQWLVVEADESDGSFLRLNPLVAVVTNIDADHLENYGNDFSRIKDAFTEFLQRLPFYGLALLCLDDPEVAELVGKARRHVMTYGIDAAADVRAEDVVQDGARMCFTLCLPEGKVIPVTLALPGRHNVLNALAASAVGWQLGVPPEVIGRALKSFVGIGRRFNDLGDVAIGNGACVRLIDDYGHHPRELEAVFAAARGGWPDKRLVVAFQPHRYSRTRDQFDAFAAVLSSVDALVLSEVYPAGEVPIPGADAKALARAIRARGRSEPVVVGQVASLIDVLPDVLQEGDLLLMMGAGDIGSIAQRIVHDGFVFGEV</sequence>
<protein>
    <recommendedName>
        <fullName evidence="1">UDP-N-acetylmuramate--L-alanine ligase</fullName>
        <ecNumber evidence="1">6.3.2.8</ecNumber>
    </recommendedName>
    <alternativeName>
        <fullName evidence="1">UDP-N-acetylmuramoyl-L-alanine synthetase</fullName>
    </alternativeName>
</protein>